<reference key="1">
    <citation type="journal article" date="2004" name="Genome Res.">
        <title>Genome sequence of Haloarcula marismortui: a halophilic archaeon from the Dead Sea.</title>
        <authorList>
            <person name="Baliga N.S."/>
            <person name="Bonneau R."/>
            <person name="Facciotti M.T."/>
            <person name="Pan M."/>
            <person name="Glusman G."/>
            <person name="Deutsch E.W."/>
            <person name="Shannon P."/>
            <person name="Chiu Y."/>
            <person name="Weng R.S."/>
            <person name="Gan R.R."/>
            <person name="Hung P."/>
            <person name="Date S.V."/>
            <person name="Marcotte E."/>
            <person name="Hood L."/>
            <person name="Ng W.V."/>
        </authorList>
    </citation>
    <scope>NUCLEOTIDE SEQUENCE [LARGE SCALE GENOMIC DNA]</scope>
    <source>
        <strain>ATCC 43049 / DSM 3752 / JCM 8966 / VKM B-1809</strain>
    </source>
</reference>
<feature type="chain" id="PRO_0000141714" description="5-amino-6-(D-ribitylamino)uracil--L-tyrosine 4-hydroxyphenyl transferase">
    <location>
        <begin position="1"/>
        <end position="450"/>
    </location>
</feature>
<feature type="domain" description="Radical SAM core" evidence="2">
    <location>
        <begin position="82"/>
        <end position="350"/>
    </location>
</feature>
<feature type="region of interest" description="Disordered" evidence="3">
    <location>
        <begin position="1"/>
        <end position="24"/>
    </location>
</feature>
<feature type="region of interest" description="Disordered" evidence="3">
    <location>
        <begin position="430"/>
        <end position="450"/>
    </location>
</feature>
<feature type="binding site" evidence="1">
    <location>
        <position position="96"/>
    </location>
    <ligand>
        <name>[4Fe-4S] cluster</name>
        <dbReference type="ChEBI" id="CHEBI:49883"/>
        <note>4Fe-4S-S-AdoMet</note>
    </ligand>
</feature>
<feature type="binding site" evidence="1">
    <location>
        <position position="100"/>
    </location>
    <ligand>
        <name>[4Fe-4S] cluster</name>
        <dbReference type="ChEBI" id="CHEBI:49883"/>
        <note>4Fe-4S-S-AdoMet</note>
    </ligand>
</feature>
<feature type="binding site" evidence="1">
    <location>
        <position position="103"/>
    </location>
    <ligand>
        <name>[4Fe-4S] cluster</name>
        <dbReference type="ChEBI" id="CHEBI:49883"/>
        <note>4Fe-4S-S-AdoMet</note>
    </ligand>
</feature>
<gene>
    <name evidence="1" type="primary">cofH</name>
    <name type="ordered locus">rrnAC3278</name>
</gene>
<protein>
    <recommendedName>
        <fullName evidence="1">5-amino-6-(D-ribitylamino)uracil--L-tyrosine 4-hydroxyphenyl transferase</fullName>
        <ecNumber evidence="1">2.5.1.147</ecNumber>
    </recommendedName>
    <alternativeName>
        <fullName evidence="1">FO synthase subunit 2</fullName>
    </alternativeName>
</protein>
<proteinExistence type="inferred from homology"/>
<accession>Q5UXN1</accession>
<evidence type="ECO:0000255" key="1">
    <source>
        <dbReference type="HAMAP-Rule" id="MF_01612"/>
    </source>
</evidence>
<evidence type="ECO:0000255" key="2">
    <source>
        <dbReference type="PROSITE-ProRule" id="PRU01266"/>
    </source>
</evidence>
<evidence type="ECO:0000256" key="3">
    <source>
        <dbReference type="SAM" id="MobiDB-lite"/>
    </source>
</evidence>
<sequence length="450" mass="50214">MPDVPETVGTPDGSTEFEHRPTTDQSFENALAKARNGTRLTVDDAVELFTTGTDRDGIDHDRKEQVLEAADRRRAEVVGDEVTFVANLNNNVTTACNTGCLFCNFKDRSEQFRSDYQEDHGGFTKTPSESRQIVQDALDRGIYEVCSVSGLHPALALDTEHREILETSDRGDLNYRSPDEYETDPATYCEQLDAMNVGDIHLHSMTPEEAYHARRGTDWSYEEVFSRLQDAGLDSVPGTAAEILVDEVRDVICPGKIRTDEWLEAMAAAASVGLDMTSTMMYGHVENEYHRALHLQRIRDLQDRTGAITEFVPLSFVHEETPLYERGMVDGGATVDEDELMIAVSRLFLDNVDHIQASWVKYGDTQGLKMLTCGADDFMGTILSEEITKRAGGDYGEFRSFQEYADMITAIGRTPVERSTDYEQRRVIDPDADVLGPQLGPRADGTPLLD</sequence>
<organism>
    <name type="scientific">Haloarcula marismortui (strain ATCC 43049 / DSM 3752 / JCM 8966 / VKM B-1809)</name>
    <name type="common">Halobacterium marismortui</name>
    <dbReference type="NCBI Taxonomy" id="272569"/>
    <lineage>
        <taxon>Archaea</taxon>
        <taxon>Methanobacteriati</taxon>
        <taxon>Methanobacteriota</taxon>
        <taxon>Stenosarchaea group</taxon>
        <taxon>Halobacteria</taxon>
        <taxon>Halobacteriales</taxon>
        <taxon>Haloarculaceae</taxon>
        <taxon>Haloarcula</taxon>
    </lineage>
</organism>
<keyword id="KW-0004">4Fe-4S</keyword>
<keyword id="KW-0408">Iron</keyword>
<keyword id="KW-0411">Iron-sulfur</keyword>
<keyword id="KW-0479">Metal-binding</keyword>
<keyword id="KW-1185">Reference proteome</keyword>
<keyword id="KW-0949">S-adenosyl-L-methionine</keyword>
<keyword id="KW-0808">Transferase</keyword>
<comment type="function">
    <text evidence="1">Catalyzes the radical-mediated synthesis of 5-amino-5-(4-hydroxybenzyl)-6-(D-ribitylimino)-5,6-dihydrouracil from 5-amino-6-(D-ribitylamino)uracil and L-tyrosine.</text>
</comment>
<comment type="catalytic activity">
    <reaction evidence="1">
        <text>5-amino-6-(D-ribitylamino)uracil + L-tyrosine + S-adenosyl-L-methionine = 5-amino-5-(4-hydroxybenzyl)-6-(D-ribitylimino)-5,6-dihydrouracil + 2-iminoacetate + 5'-deoxyadenosine + L-methionine + H(+)</text>
        <dbReference type="Rhea" id="RHEA:55200"/>
        <dbReference type="ChEBI" id="CHEBI:15378"/>
        <dbReference type="ChEBI" id="CHEBI:15934"/>
        <dbReference type="ChEBI" id="CHEBI:17319"/>
        <dbReference type="ChEBI" id="CHEBI:57844"/>
        <dbReference type="ChEBI" id="CHEBI:58315"/>
        <dbReference type="ChEBI" id="CHEBI:59789"/>
        <dbReference type="ChEBI" id="CHEBI:77846"/>
        <dbReference type="ChEBI" id="CHEBI:85936"/>
        <dbReference type="EC" id="2.5.1.147"/>
    </reaction>
</comment>
<comment type="cofactor">
    <cofactor evidence="1">
        <name>[4Fe-4S] cluster</name>
        <dbReference type="ChEBI" id="CHEBI:49883"/>
    </cofactor>
    <text evidence="1">Binds 1 [4Fe-4S] cluster. The cluster is coordinated with 3 cysteines and an exchangeable S-adenosyl-L-methionine.</text>
</comment>
<comment type="pathway">
    <text evidence="1">Cofactor biosynthesis; coenzyme F0 biosynthesis.</text>
</comment>
<comment type="subunit">
    <text evidence="1">Consists of two subunits, CofG and CofH.</text>
</comment>
<comment type="similarity">
    <text evidence="1">Belongs to the radical SAM superfamily. CofH family.</text>
</comment>
<name>COFH_HALMA</name>
<dbReference type="EC" id="2.5.1.147" evidence="1"/>
<dbReference type="EMBL" id="AY596297">
    <property type="protein sequence ID" value="AAV47972.1"/>
    <property type="molecule type" value="Genomic_DNA"/>
</dbReference>
<dbReference type="RefSeq" id="WP_011224713.1">
    <property type="nucleotide sequence ID" value="NC_006396.1"/>
</dbReference>
<dbReference type="SMR" id="Q5UXN1"/>
<dbReference type="STRING" id="272569.rrnAC3278"/>
<dbReference type="PaxDb" id="272569-rrnAC3278"/>
<dbReference type="EnsemblBacteria" id="AAV47972">
    <property type="protein sequence ID" value="AAV47972"/>
    <property type="gene ID" value="rrnAC3278"/>
</dbReference>
<dbReference type="GeneID" id="40154074"/>
<dbReference type="KEGG" id="hma:rrnAC3278"/>
<dbReference type="PATRIC" id="fig|272569.17.peg.3809"/>
<dbReference type="eggNOG" id="arCOG00656">
    <property type="taxonomic scope" value="Archaea"/>
</dbReference>
<dbReference type="HOGENOM" id="CLU_040406_1_1_2"/>
<dbReference type="UniPathway" id="UPA00072"/>
<dbReference type="Proteomes" id="UP000001169">
    <property type="component" value="Chromosome I"/>
</dbReference>
<dbReference type="GO" id="GO:0051539">
    <property type="term" value="F:4 iron, 4 sulfur cluster binding"/>
    <property type="evidence" value="ECO:0007669"/>
    <property type="project" value="UniProtKB-KW"/>
</dbReference>
<dbReference type="GO" id="GO:0141093">
    <property type="term" value="F:5-amino-6-(D-ribitylamino)uracil--L-tyrosine 4-hydroxyphenyl transferase activity"/>
    <property type="evidence" value="ECO:0007669"/>
    <property type="project" value="UniProtKB-EC"/>
</dbReference>
<dbReference type="GO" id="GO:0044689">
    <property type="term" value="F:7,8-didemethyl-8-hydroxy-5-deazariboflavin synthase activity"/>
    <property type="evidence" value="ECO:0007669"/>
    <property type="project" value="TreeGrafter"/>
</dbReference>
<dbReference type="GO" id="GO:0005506">
    <property type="term" value="F:iron ion binding"/>
    <property type="evidence" value="ECO:0007669"/>
    <property type="project" value="UniProtKB-UniRule"/>
</dbReference>
<dbReference type="CDD" id="cd01335">
    <property type="entry name" value="Radical_SAM"/>
    <property type="match status" value="1"/>
</dbReference>
<dbReference type="Gene3D" id="3.20.20.70">
    <property type="entry name" value="Aldolase class I"/>
    <property type="match status" value="1"/>
</dbReference>
<dbReference type="HAMAP" id="MF_01612">
    <property type="entry name" value="FO_synth_sub2"/>
    <property type="match status" value="1"/>
</dbReference>
<dbReference type="InterPro" id="IPR013785">
    <property type="entry name" value="Aldolase_TIM"/>
</dbReference>
<dbReference type="InterPro" id="IPR045567">
    <property type="entry name" value="CofH/MnqC-like_C"/>
</dbReference>
<dbReference type="InterPro" id="IPR019940">
    <property type="entry name" value="CofH_family"/>
</dbReference>
<dbReference type="InterPro" id="IPR034405">
    <property type="entry name" value="F420"/>
</dbReference>
<dbReference type="InterPro" id="IPR020050">
    <property type="entry name" value="FO_synthase_su2"/>
</dbReference>
<dbReference type="InterPro" id="IPR007197">
    <property type="entry name" value="rSAM"/>
</dbReference>
<dbReference type="NCBIfam" id="TIGR00423">
    <property type="entry name" value="CofH family radical SAM protein"/>
    <property type="match status" value="1"/>
</dbReference>
<dbReference type="NCBIfam" id="NF005609">
    <property type="entry name" value="PRK07360.1"/>
    <property type="match status" value="1"/>
</dbReference>
<dbReference type="PANTHER" id="PTHR43076">
    <property type="entry name" value="FO SYNTHASE (COFH)"/>
    <property type="match status" value="1"/>
</dbReference>
<dbReference type="PANTHER" id="PTHR43076:SF1">
    <property type="entry name" value="LIPOYL SYNTHASE 2"/>
    <property type="match status" value="1"/>
</dbReference>
<dbReference type="Pfam" id="PF19288">
    <property type="entry name" value="CofH_C"/>
    <property type="match status" value="1"/>
</dbReference>
<dbReference type="Pfam" id="PF04055">
    <property type="entry name" value="Radical_SAM"/>
    <property type="match status" value="1"/>
</dbReference>
<dbReference type="SFLD" id="SFLDF00293">
    <property type="entry name" value="((2_3_4_5-tetrahydroxypentyl)a"/>
    <property type="match status" value="1"/>
</dbReference>
<dbReference type="SFLD" id="SFLDG01388">
    <property type="entry name" value="7_8-didemethyl-8-hydroxy-5-dea"/>
    <property type="match status" value="1"/>
</dbReference>
<dbReference type="SUPFAM" id="SSF102114">
    <property type="entry name" value="Radical SAM enzymes"/>
    <property type="match status" value="1"/>
</dbReference>
<dbReference type="PROSITE" id="PS51918">
    <property type="entry name" value="RADICAL_SAM"/>
    <property type="match status" value="1"/>
</dbReference>